<accession>Q01574</accession>
<accession>D6VPG4</accession>
<accession>Q66RJ0</accession>
<evidence type="ECO:0000250" key="1"/>
<evidence type="ECO:0000250" key="2">
    <source>
        <dbReference type="UniProtKB" id="P30624"/>
    </source>
</evidence>
<evidence type="ECO:0000255" key="3"/>
<evidence type="ECO:0000256" key="4">
    <source>
        <dbReference type="SAM" id="MobiDB-lite"/>
    </source>
</evidence>
<evidence type="ECO:0000269" key="5">
    <source>
    </source>
</evidence>
<evidence type="ECO:0000269" key="6">
    <source>
    </source>
</evidence>
<evidence type="ECO:0000269" key="7">
    <source>
    </source>
</evidence>
<evidence type="ECO:0000269" key="8">
    <source>
    </source>
</evidence>
<evidence type="ECO:0000305" key="9"/>
<evidence type="ECO:0000305" key="10">
    <source>
    </source>
</evidence>
<evidence type="ECO:0007829" key="11">
    <source>
        <dbReference type="PDB" id="1RY2"/>
    </source>
</evidence>
<organism>
    <name type="scientific">Saccharomyces cerevisiae (strain ATCC 204508 / S288c)</name>
    <name type="common">Baker's yeast</name>
    <dbReference type="NCBI Taxonomy" id="559292"/>
    <lineage>
        <taxon>Eukaryota</taxon>
        <taxon>Fungi</taxon>
        <taxon>Dikarya</taxon>
        <taxon>Ascomycota</taxon>
        <taxon>Saccharomycotina</taxon>
        <taxon>Saccharomycetes</taxon>
        <taxon>Saccharomycetales</taxon>
        <taxon>Saccharomycetaceae</taxon>
        <taxon>Saccharomyces</taxon>
    </lineage>
</organism>
<keyword id="KW-0002">3D-structure</keyword>
<keyword id="KW-0067">ATP-binding</keyword>
<keyword id="KW-0963">Cytoplasm</keyword>
<keyword id="KW-0256">Endoplasmic reticulum</keyword>
<keyword id="KW-0436">Ligase</keyword>
<keyword id="KW-0492">Microsome</keyword>
<keyword id="KW-0496">Mitochondrion</keyword>
<keyword id="KW-0547">Nucleotide-binding</keyword>
<keyword id="KW-0539">Nucleus</keyword>
<keyword id="KW-1185">Reference proteome</keyword>
<gene>
    <name type="primary">ACS1</name>
    <name type="ordered locus">YAL054C</name>
    <name type="ORF">FUN44</name>
</gene>
<sequence>MSPSAVQSSKLEEQSSEIDKLKAKMSQSAATAQQKKEHEYEHLTSVKIVPQRPISDRLQPAIATHYSPHLDGLQDYQRLHKESIEDPAKFFGSKATQFLNWSKPFDKVFIPDPKTGRPSFQNNAWFLNGQLNACYNCVDRHALKTPNKKAIIFEGDEPGQGYSITYKELLEEVCQVAQVLTYSMGVRKGDTVAVYMPMVPEAIITLLAISRIGAIHSVVFAGFSSNSLRDRINDGDSKVVITTDESNRGGKVIETKRIVDDALRETPGVRHVLVYRKTNNPSVAFHAPRDLDWATEKKKYKTYYPCTPVDSEDPLFLLYTSGSTGAPKGVQHSTAGYLLGALLTMRYTFDTHQEDVFFTAGDIGWITGHTYVVYGPLLYGCATLVFEGTPAYPNYSRYWDIIDEHKVTQFYVAPTALRLLKRAGDSYIENHSLKSLRCLGSVGEPIAAEVWEWYSEKIGKNEIPIVDTYWQTESGSHLVTPLAGGVTPMKPGSASFPFFGIDAVVLDPNTGEELNTSHAEGVLAVKAAWPSFARTIWKNHDRYLDTYLNPYPGYYFTGDGAAKDKDGYIWILGRVDDVVNVSGHRLSTAEIEAAIIEDPIVAECAVVGFNDDLTGQAVAAFVVLKNKSSWSTATDDELQDIKKHLVFTVRKDIGPFAAPKLIILVDDLPKTRSGKIMRRILRKILAGESDQLGDVSTLSNPGIVRHLIDSVKL</sequence>
<proteinExistence type="evidence at protein level"/>
<comment type="function">
    <text evidence="6 7">Catalyzes the production of acetyl-CoA. Provides the acetyl-CoA source for histone acetylation in the nucleus. 'Aerobic' isozyme of acetyl-coenzyme A synthetase, which supports growth on nonfermentable carbon sources such as glycerol and ethanol. May be required for assimilation of ethanol and acetate.</text>
</comment>
<comment type="catalytic activity">
    <reaction evidence="7">
        <text>acetate + ATP + CoA = acetyl-CoA + AMP + diphosphate</text>
        <dbReference type="Rhea" id="RHEA:23176"/>
        <dbReference type="ChEBI" id="CHEBI:30089"/>
        <dbReference type="ChEBI" id="CHEBI:30616"/>
        <dbReference type="ChEBI" id="CHEBI:33019"/>
        <dbReference type="ChEBI" id="CHEBI:57287"/>
        <dbReference type="ChEBI" id="CHEBI:57288"/>
        <dbReference type="ChEBI" id="CHEBI:456215"/>
        <dbReference type="EC" id="6.2.1.1"/>
    </reaction>
    <physiologicalReaction direction="left-to-right" evidence="10">
        <dbReference type="Rhea" id="RHEA:23177"/>
    </physiologicalReaction>
</comment>
<comment type="biophysicochemical properties">
    <kinetics>
        <KM evidence="7">0.32 mM for acetate</KM>
        <KM evidence="7">1.4 mM for ATP</KM>
        <Vmax evidence="7">1.1 umol/min/mg enzyme</Vmax>
    </kinetics>
</comment>
<comment type="subcellular location">
    <subcellularLocation>
        <location evidence="9">Microsome</location>
    </subcellularLocation>
    <subcellularLocation>
        <location>Cytoplasm</location>
    </subcellularLocation>
    <subcellularLocation>
        <location>Mitochondrion</location>
    </subcellularLocation>
    <subcellularLocation>
        <location>Nucleus</location>
    </subcellularLocation>
</comment>
<comment type="induction">
    <text evidence="7 8">By acetate, acetaldehyde and ethanol. Subject to glucose catabolite repression. Inactivated and degraded after addition of glucose (at protein level).</text>
</comment>
<comment type="domain">
    <text evidence="2">The FACS motif is required for catalytic activity and substrate specificity.</text>
</comment>
<comment type="miscellaneous">
    <text evidence="5">Present with 2890 molecules/cell in log phase SD medium.</text>
</comment>
<comment type="similarity">
    <text evidence="9">Belongs to the ATP-dependent AMP-binding enzyme family.</text>
</comment>
<comment type="caution">
    <text evidence="9">It is uncertain whether Met-1 or Met-25 is the initiator.</text>
</comment>
<dbReference type="EC" id="6.2.1.1" evidence="7"/>
<dbReference type="EMBL" id="X66425">
    <property type="protein sequence ID" value="CAA47054.1"/>
    <property type="molecule type" value="Genomic_DNA"/>
</dbReference>
<dbReference type="EMBL" id="U12980">
    <property type="protein sequence ID" value="AAC04979.1"/>
    <property type="molecule type" value="Genomic_DNA"/>
</dbReference>
<dbReference type="EMBL" id="AY723758">
    <property type="protein sequence ID" value="AAU09675.1"/>
    <property type="molecule type" value="Genomic_DNA"/>
</dbReference>
<dbReference type="EMBL" id="X76891">
    <property type="protein sequence ID" value="CAA54220.1"/>
    <property type="molecule type" value="Genomic_DNA"/>
</dbReference>
<dbReference type="EMBL" id="BK006935">
    <property type="protein sequence ID" value="DAA06934.1"/>
    <property type="molecule type" value="Genomic_DNA"/>
</dbReference>
<dbReference type="PIR" id="S51967">
    <property type="entry name" value="S30019"/>
</dbReference>
<dbReference type="RefSeq" id="NP_009347.1">
    <property type="nucleotide sequence ID" value="NM_001178197.1"/>
</dbReference>
<dbReference type="PDB" id="1RY2">
    <property type="method" value="X-ray"/>
    <property type="resolution" value="2.30 A"/>
    <property type="chains" value="A=72-713"/>
</dbReference>
<dbReference type="PDBsum" id="1RY2"/>
<dbReference type="SMR" id="Q01574"/>
<dbReference type="BioGRID" id="31775">
    <property type="interactions" value="107"/>
</dbReference>
<dbReference type="DIP" id="DIP-4326N"/>
<dbReference type="FunCoup" id="Q01574">
    <property type="interactions" value="660"/>
</dbReference>
<dbReference type="IntAct" id="Q01574">
    <property type="interactions" value="4"/>
</dbReference>
<dbReference type="MINT" id="Q01574"/>
<dbReference type="STRING" id="4932.YAL054C"/>
<dbReference type="iPTMnet" id="Q01574"/>
<dbReference type="PaxDb" id="4932-YAL054C"/>
<dbReference type="PeptideAtlas" id="Q01574"/>
<dbReference type="EnsemblFungi" id="YAL054C_mRNA">
    <property type="protein sequence ID" value="YAL054C"/>
    <property type="gene ID" value="YAL054C"/>
</dbReference>
<dbReference type="GeneID" id="851245"/>
<dbReference type="KEGG" id="sce:YAL054C"/>
<dbReference type="AGR" id="SGD:S000000050"/>
<dbReference type="SGD" id="S000000050">
    <property type="gene designation" value="ACS1"/>
</dbReference>
<dbReference type="VEuPathDB" id="FungiDB:YAL054C"/>
<dbReference type="eggNOG" id="KOG1175">
    <property type="taxonomic scope" value="Eukaryota"/>
</dbReference>
<dbReference type="GeneTree" id="ENSGT00940000176537"/>
<dbReference type="HOGENOM" id="CLU_000022_3_6_1"/>
<dbReference type="InParanoid" id="Q01574"/>
<dbReference type="OMA" id="AIKASWP"/>
<dbReference type="OrthoDB" id="1706066at2759"/>
<dbReference type="BioCyc" id="MetaCyc:YAL054C-MONOMER"/>
<dbReference type="BioCyc" id="YEAST:YAL054C-MONOMER"/>
<dbReference type="BRENDA" id="6.2.1.1">
    <property type="organism ID" value="984"/>
</dbReference>
<dbReference type="Reactome" id="R-SCE-2151201">
    <property type="pathway name" value="Transcriptional activation of mitochondrial biogenesis"/>
</dbReference>
<dbReference type="Reactome" id="R-SCE-71384">
    <property type="pathway name" value="Ethanol oxidation"/>
</dbReference>
<dbReference type="SABIO-RK" id="Q01574"/>
<dbReference type="BioGRID-ORCS" id="851245">
    <property type="hits" value="8 hits in 10 CRISPR screens"/>
</dbReference>
<dbReference type="EvolutionaryTrace" id="Q01574"/>
<dbReference type="PRO" id="PR:Q01574"/>
<dbReference type="Proteomes" id="UP000002311">
    <property type="component" value="Chromosome I"/>
</dbReference>
<dbReference type="RNAct" id="Q01574">
    <property type="molecule type" value="protein"/>
</dbReference>
<dbReference type="GO" id="GO:0005829">
    <property type="term" value="C:cytosol"/>
    <property type="evidence" value="ECO:0000314"/>
    <property type="project" value="SGD"/>
</dbReference>
<dbReference type="GO" id="GO:0005783">
    <property type="term" value="C:endoplasmic reticulum"/>
    <property type="evidence" value="ECO:0007669"/>
    <property type="project" value="UniProtKB-KW"/>
</dbReference>
<dbReference type="GO" id="GO:0005739">
    <property type="term" value="C:mitochondrion"/>
    <property type="evidence" value="ECO:0007005"/>
    <property type="project" value="SGD"/>
</dbReference>
<dbReference type="GO" id="GO:0005634">
    <property type="term" value="C:nucleus"/>
    <property type="evidence" value="ECO:0007669"/>
    <property type="project" value="UniProtKB-SubCell"/>
</dbReference>
<dbReference type="GO" id="GO:0003987">
    <property type="term" value="F:acetate-CoA ligase activity"/>
    <property type="evidence" value="ECO:0000314"/>
    <property type="project" value="SGD"/>
</dbReference>
<dbReference type="GO" id="GO:0016880">
    <property type="term" value="F:acid-ammonia (or amide) ligase activity"/>
    <property type="evidence" value="ECO:0000314"/>
    <property type="project" value="SGD"/>
</dbReference>
<dbReference type="GO" id="GO:0016208">
    <property type="term" value="F:AMP binding"/>
    <property type="evidence" value="ECO:0007669"/>
    <property type="project" value="InterPro"/>
</dbReference>
<dbReference type="GO" id="GO:0005524">
    <property type="term" value="F:ATP binding"/>
    <property type="evidence" value="ECO:0007669"/>
    <property type="project" value="UniProtKB-KW"/>
</dbReference>
<dbReference type="GO" id="GO:0019654">
    <property type="term" value="P:acetate fermentation"/>
    <property type="evidence" value="ECO:0000315"/>
    <property type="project" value="SGD"/>
</dbReference>
<dbReference type="GO" id="GO:0006085">
    <property type="term" value="P:acetyl-CoA biosynthetic process"/>
    <property type="evidence" value="ECO:0000314"/>
    <property type="project" value="SGD"/>
</dbReference>
<dbReference type="GO" id="GO:0019427">
    <property type="term" value="P:acetyl-CoA biosynthetic process from acetate"/>
    <property type="evidence" value="ECO:0007669"/>
    <property type="project" value="InterPro"/>
</dbReference>
<dbReference type="CDD" id="cd05966">
    <property type="entry name" value="ACS"/>
    <property type="match status" value="1"/>
</dbReference>
<dbReference type="FunFam" id="3.30.300.30:FF:000004">
    <property type="entry name" value="Acetyl-coenzyme A synthetase"/>
    <property type="match status" value="1"/>
</dbReference>
<dbReference type="FunFam" id="3.40.50.12780:FF:000001">
    <property type="entry name" value="Acetyl-coenzyme A synthetase"/>
    <property type="match status" value="1"/>
</dbReference>
<dbReference type="Gene3D" id="3.30.300.30">
    <property type="match status" value="1"/>
</dbReference>
<dbReference type="Gene3D" id="3.40.50.12780">
    <property type="entry name" value="N-terminal domain of ligase-like"/>
    <property type="match status" value="1"/>
</dbReference>
<dbReference type="InterPro" id="IPR011904">
    <property type="entry name" value="Ac_CoA_lig"/>
</dbReference>
<dbReference type="InterPro" id="IPR032387">
    <property type="entry name" value="ACAS_N"/>
</dbReference>
<dbReference type="InterPro" id="IPR025110">
    <property type="entry name" value="AMP-bd_C"/>
</dbReference>
<dbReference type="InterPro" id="IPR045851">
    <property type="entry name" value="AMP-bd_C_sf"/>
</dbReference>
<dbReference type="InterPro" id="IPR020845">
    <property type="entry name" value="AMP-binding_CS"/>
</dbReference>
<dbReference type="InterPro" id="IPR000873">
    <property type="entry name" value="AMP-dep_synth/lig_dom"/>
</dbReference>
<dbReference type="InterPro" id="IPR042099">
    <property type="entry name" value="ANL_N_sf"/>
</dbReference>
<dbReference type="NCBIfam" id="TIGR02188">
    <property type="entry name" value="Ac_CoA_lig_AcsA"/>
    <property type="match status" value="1"/>
</dbReference>
<dbReference type="NCBIfam" id="NF001208">
    <property type="entry name" value="PRK00174.1"/>
    <property type="match status" value="1"/>
</dbReference>
<dbReference type="PANTHER" id="PTHR24095">
    <property type="entry name" value="ACETYL-COENZYME A SYNTHETASE"/>
    <property type="match status" value="1"/>
</dbReference>
<dbReference type="PANTHER" id="PTHR24095:SF14">
    <property type="entry name" value="ACETYL-COENZYME A SYNTHETASE 1"/>
    <property type="match status" value="1"/>
</dbReference>
<dbReference type="Pfam" id="PF16177">
    <property type="entry name" value="ACAS_N"/>
    <property type="match status" value="1"/>
</dbReference>
<dbReference type="Pfam" id="PF00501">
    <property type="entry name" value="AMP-binding"/>
    <property type="match status" value="1"/>
</dbReference>
<dbReference type="Pfam" id="PF13193">
    <property type="entry name" value="AMP-binding_C"/>
    <property type="match status" value="1"/>
</dbReference>
<dbReference type="SUPFAM" id="SSF56801">
    <property type="entry name" value="Acetyl-CoA synthetase-like"/>
    <property type="match status" value="1"/>
</dbReference>
<dbReference type="PROSITE" id="PS00455">
    <property type="entry name" value="AMP_BINDING"/>
    <property type="match status" value="1"/>
</dbReference>
<protein>
    <recommendedName>
        <fullName>Acetyl-coenzyme A synthetase 1</fullName>
        <ecNumber evidence="7">6.2.1.1</ecNumber>
    </recommendedName>
    <alternativeName>
        <fullName>Acetate--CoA ligase 1</fullName>
    </alternativeName>
    <alternativeName>
        <fullName>Acyl-activating enzyme 1</fullName>
    </alternativeName>
</protein>
<reference key="1">
    <citation type="journal article" date="1992" name="Yeast">
        <title>Cloning and disruption of a gene required for growth on acetate but not on ethanol: the acetyl-coenzyme A synthetase gene of Saccharomyces cerevisiae.</title>
        <authorList>
            <person name="de Virgilio C."/>
            <person name="Buerckert N."/>
            <person name="Barth G."/>
            <person name="Neuhaus J.-M."/>
            <person name="Boller T."/>
            <person name="Wiemken A."/>
        </authorList>
    </citation>
    <scope>NUCLEOTIDE SEQUENCE [GENOMIC DNA]</scope>
    <source>
        <strain>S288c / GRF88</strain>
    </source>
</reference>
<reference key="2">
    <citation type="journal article" date="1995" name="Proc. Natl. Acad. Sci. U.S.A.">
        <title>The nucleotide sequence of chromosome I from Saccharomyces cerevisiae.</title>
        <authorList>
            <person name="Bussey H."/>
            <person name="Kaback D.B."/>
            <person name="Zhong W.-W."/>
            <person name="Vo D.H."/>
            <person name="Clark M.W."/>
            <person name="Fortin N."/>
            <person name="Hall J."/>
            <person name="Ouellette B.F.F."/>
            <person name="Keng T."/>
            <person name="Barton A.B."/>
            <person name="Su Y."/>
            <person name="Davies C.J."/>
            <person name="Storms R.K."/>
        </authorList>
    </citation>
    <scope>NUCLEOTIDE SEQUENCE [LARGE SCALE GENOMIC DNA]</scope>
    <source>
        <strain>ATCC 204508 / S288c</strain>
    </source>
</reference>
<reference key="3">
    <citation type="journal article" date="2014" name="G3 (Bethesda)">
        <title>The reference genome sequence of Saccharomyces cerevisiae: Then and now.</title>
        <authorList>
            <person name="Engel S.R."/>
            <person name="Dietrich F.S."/>
            <person name="Fisk D.G."/>
            <person name="Binkley G."/>
            <person name="Balakrishnan R."/>
            <person name="Costanzo M.C."/>
            <person name="Dwight S.S."/>
            <person name="Hitz B.C."/>
            <person name="Karra K."/>
            <person name="Nash R.S."/>
            <person name="Weng S."/>
            <person name="Wong E.D."/>
            <person name="Lloyd P."/>
            <person name="Skrzypek M.S."/>
            <person name="Miyasato S.R."/>
            <person name="Simison M."/>
            <person name="Cherry J.M."/>
        </authorList>
    </citation>
    <scope>GENOME REANNOTATION</scope>
    <source>
        <strain>ATCC 204508 / S288c</strain>
    </source>
</reference>
<reference key="4">
    <citation type="journal article" date="2007" name="Genome Res.">
        <title>Approaching a complete repository of sequence-verified protein-encoding clones for Saccharomyces cerevisiae.</title>
        <authorList>
            <person name="Hu Y."/>
            <person name="Rolfs A."/>
            <person name="Bhullar B."/>
            <person name="Murthy T.V.S."/>
            <person name="Zhu C."/>
            <person name="Berger M.F."/>
            <person name="Camargo A.A."/>
            <person name="Kelley F."/>
            <person name="McCarron S."/>
            <person name="Jepson D."/>
            <person name="Richardson A."/>
            <person name="Raphael J."/>
            <person name="Moreira D."/>
            <person name="Taycher E."/>
            <person name="Zuo D."/>
            <person name="Mohr S."/>
            <person name="Kane M.F."/>
            <person name="Williamson J."/>
            <person name="Simpson A.J.G."/>
            <person name="Bulyk M.L."/>
            <person name="Harlow E."/>
            <person name="Marsischky G."/>
            <person name="Kolodner R.D."/>
            <person name="LaBaer J."/>
        </authorList>
    </citation>
    <scope>NUCLEOTIDE SEQUENCE [LARGE SCALE GENOMIC DNA]</scope>
    <source>
        <strain>ATCC 204511 / S288c / AB972</strain>
    </source>
</reference>
<reference key="5">
    <citation type="journal article" date="1995" name="Gene">
        <title>Carbon source-dependent regulation of the acetyl-coenzyme A synthetase-encoding gene ACS1 from Saccharomyces cerevisiae.</title>
        <authorList>
            <person name="Kratzer S."/>
            <person name="Schueller H.-J."/>
        </authorList>
    </citation>
    <scope>NUCLEOTIDE SEQUENCE [GENOMIC DNA] OF 1-59</scope>
    <source>
        <strain>GRF78</strain>
    </source>
</reference>
<reference key="6">
    <citation type="journal article" date="1996" name="J. Biol. Chem.">
        <title>The two acetyl-coenzyme A synthetases of Saccharomyces cerevisiae differ with respect to kinetic properties and transcriptional regulation.</title>
        <authorList>
            <person name="van den Berg M.A."/>
            <person name="de Jong-Gubbels P."/>
            <person name="Kortland C.J."/>
            <person name="van Dijken J.P."/>
            <person name="Pronk J.T."/>
            <person name="Steensma H.Y."/>
        </authorList>
    </citation>
    <scope>FUNCTION</scope>
    <scope>BIOPHYSICOCHEMICAL PROPERTIES</scope>
    <scope>INDUCTION</scope>
    <scope>CATALYTIC ACTIVITY</scope>
</reference>
<reference key="7">
    <citation type="journal article" date="1997" name="FEMS Microbiol. Lett.">
        <title>The Saccharomyces cerevisiae acetyl-coenzyme A synthetase encoded by the ACS1 gene, but not the ACS2-encoded enzyme, is subject to glucose catabolite inactivation.</title>
        <authorList>
            <person name="de Jong-Gubbels P."/>
            <person name="van den Berg M.A."/>
            <person name="Steensma H.Y."/>
            <person name="van Dijken J.P."/>
            <person name="Pronk J.T."/>
        </authorList>
    </citation>
    <scope>INDUCTION</scope>
</reference>
<reference key="8">
    <citation type="journal article" date="2002" name="Genes Dev.">
        <title>Subcellular localization of the yeast proteome.</title>
        <authorList>
            <person name="Kumar A."/>
            <person name="Agarwal S."/>
            <person name="Heyman J.A."/>
            <person name="Matson S."/>
            <person name="Heidtman M."/>
            <person name="Piccirillo S."/>
            <person name="Umansky L."/>
            <person name="Drawid A."/>
            <person name="Jansen R."/>
            <person name="Liu Y."/>
            <person name="Cheung K.-H."/>
            <person name="Miller P."/>
            <person name="Gerstein M."/>
            <person name="Roeder G.S."/>
            <person name="Snyder M."/>
        </authorList>
    </citation>
    <scope>SUBCELLULAR LOCATION</scope>
</reference>
<reference key="9">
    <citation type="journal article" date="2003" name="Nature">
        <title>Global analysis of protein localization in budding yeast.</title>
        <authorList>
            <person name="Huh W.-K."/>
            <person name="Falvo J.V."/>
            <person name="Gerke L.C."/>
            <person name="Carroll A.S."/>
            <person name="Howson R.W."/>
            <person name="Weissman J.S."/>
            <person name="O'Shea E.K."/>
        </authorList>
    </citation>
    <scope>SUBCELLULAR LOCATION [LARGE SCALE ANALYSIS]</scope>
</reference>
<reference key="10">
    <citation type="journal article" date="2003" name="Nature">
        <title>Global analysis of protein expression in yeast.</title>
        <authorList>
            <person name="Ghaemmaghami S."/>
            <person name="Huh W.-K."/>
            <person name="Bower K."/>
            <person name="Howson R.W."/>
            <person name="Belle A."/>
            <person name="Dephoure N."/>
            <person name="O'Shea E.K."/>
            <person name="Weissman J.S."/>
        </authorList>
    </citation>
    <scope>LEVEL OF PROTEIN EXPRESSION [LARGE SCALE ANALYSIS]</scope>
</reference>
<reference key="11">
    <citation type="journal article" date="2003" name="Proc. Natl. Acad. Sci. U.S.A.">
        <title>The proteome of Saccharomyces cerevisiae mitochondria.</title>
        <authorList>
            <person name="Sickmann A."/>
            <person name="Reinders J."/>
            <person name="Wagner Y."/>
            <person name="Joppich C."/>
            <person name="Zahedi R.P."/>
            <person name="Meyer H.E."/>
            <person name="Schoenfisch B."/>
            <person name="Perschil I."/>
            <person name="Chacinska A."/>
            <person name="Guiard B."/>
            <person name="Rehling P."/>
            <person name="Pfanner N."/>
            <person name="Meisinger C."/>
        </authorList>
    </citation>
    <scope>SUBCELLULAR LOCATION [LARGE SCALE ANALYSIS]</scope>
    <source>
        <strain>ATCC 76625 / YPH499</strain>
    </source>
</reference>
<reference key="12">
    <citation type="journal article" date="2006" name="Mol. Cell">
        <title>Nucleocytosolic acetyl-coenzyme a synthetase is required for histone acetylation and global transcription.</title>
        <authorList>
            <person name="Takahashi H."/>
            <person name="McCaffery J.M."/>
            <person name="Irizarry R.A."/>
            <person name="Boeke J.D."/>
        </authorList>
    </citation>
    <scope>FUNCTION</scope>
</reference>
<reference key="13">
    <citation type="journal article" date="2004" name="Biochemistry">
        <title>Crystal structure of yeast acetyl-coenzyme A synthetase in complex with AMP.</title>
        <authorList>
            <person name="Jogl G."/>
            <person name="Tong L."/>
        </authorList>
    </citation>
    <scope>X-RAY CRYSTALLOGRAPHY (2.3 ANGSTROMS) OF 72-713 IN COMPLEX WITH THE ATP ANALOG AMP</scope>
</reference>
<feature type="chain" id="PRO_0000208420" description="Acetyl-coenzyme A synthetase 1">
    <location>
        <begin position="1"/>
        <end position="713"/>
    </location>
</feature>
<feature type="region of interest" description="Disordered" evidence="4">
    <location>
        <begin position="1"/>
        <end position="39"/>
    </location>
</feature>
<feature type="short sequence motif" description="FACS" evidence="2">
    <location>
        <begin position="552"/>
        <end position="600"/>
    </location>
</feature>
<feature type="short sequence motif" description="Microbody targeting signal" evidence="3">
    <location>
        <begin position="711"/>
        <end position="713"/>
    </location>
</feature>
<feature type="compositionally biased region" description="Basic and acidic residues" evidence="4">
    <location>
        <begin position="10"/>
        <end position="22"/>
    </location>
</feature>
<feature type="binding site" evidence="1">
    <location>
        <begin position="248"/>
        <end position="251"/>
    </location>
    <ligand>
        <name>CoA</name>
        <dbReference type="ChEBI" id="CHEBI:57287"/>
    </ligand>
</feature>
<feature type="binding site" evidence="1">
    <location>
        <position position="367"/>
    </location>
    <ligand>
        <name>CoA</name>
        <dbReference type="ChEBI" id="CHEBI:57287"/>
    </ligand>
</feature>
<feature type="binding site">
    <location>
        <begin position="443"/>
        <end position="445"/>
    </location>
    <ligand>
        <name>ATP</name>
        <dbReference type="ChEBI" id="CHEBI:30616"/>
    </ligand>
</feature>
<feature type="binding site">
    <location>
        <begin position="467"/>
        <end position="472"/>
    </location>
    <ligand>
        <name>ATP</name>
        <dbReference type="ChEBI" id="CHEBI:30616"/>
    </ligand>
</feature>
<feature type="binding site">
    <location>
        <position position="559"/>
    </location>
    <ligand>
        <name>ATP</name>
        <dbReference type="ChEBI" id="CHEBI:30616"/>
    </ligand>
</feature>
<feature type="binding site">
    <location>
        <position position="574"/>
    </location>
    <ligand>
        <name>ATP</name>
        <dbReference type="ChEBI" id="CHEBI:30616"/>
    </ligand>
</feature>
<feature type="binding site" evidence="1">
    <location>
        <position position="582"/>
    </location>
    <ligand>
        <name>CoA</name>
        <dbReference type="ChEBI" id="CHEBI:57287"/>
    </ligand>
</feature>
<feature type="binding site" evidence="1">
    <location>
        <position position="585"/>
    </location>
    <ligand>
        <name>ATP</name>
        <dbReference type="ChEBI" id="CHEBI:30616"/>
    </ligand>
</feature>
<feature type="binding site" evidence="1">
    <location>
        <position position="650"/>
    </location>
    <ligand>
        <name>CoA</name>
        <dbReference type="ChEBI" id="CHEBI:57287"/>
    </ligand>
</feature>
<feature type="sequence conflict" description="In Ref. 1; CAA47054." evidence="9" ref="1">
    <original>Q</original>
    <variation>R</variation>
    <location>
        <position position="34"/>
    </location>
</feature>
<feature type="sequence conflict" description="In Ref. 4; AAU09675." evidence="9" ref="4">
    <original>K</original>
    <variation>E</variation>
    <location>
        <position position="328"/>
    </location>
</feature>
<feature type="helix" evidence="11">
    <location>
        <begin position="75"/>
        <end position="85"/>
    </location>
</feature>
<feature type="helix" evidence="11">
    <location>
        <begin position="87"/>
        <end position="98"/>
    </location>
</feature>
<feature type="strand" evidence="11">
    <location>
        <begin position="113"/>
        <end position="115"/>
    </location>
</feature>
<feature type="helix" evidence="11">
    <location>
        <begin position="133"/>
        <end position="137"/>
    </location>
</feature>
<feature type="helix" evidence="11">
    <location>
        <begin position="139"/>
        <end position="142"/>
    </location>
</feature>
<feature type="strand" evidence="11">
    <location>
        <begin position="148"/>
        <end position="154"/>
    </location>
</feature>
<feature type="strand" evidence="11">
    <location>
        <begin position="162"/>
        <end position="165"/>
    </location>
</feature>
<feature type="helix" evidence="11">
    <location>
        <begin position="166"/>
        <end position="182"/>
    </location>
</feature>
<feature type="strand" evidence="11">
    <location>
        <begin position="191"/>
        <end position="194"/>
    </location>
</feature>
<feature type="helix" evidence="11">
    <location>
        <begin position="200"/>
        <end position="211"/>
    </location>
</feature>
<feature type="strand" evidence="11">
    <location>
        <begin position="215"/>
        <end position="218"/>
    </location>
</feature>
<feature type="helix" evidence="11">
    <location>
        <begin position="225"/>
        <end position="235"/>
    </location>
</feature>
<feature type="strand" evidence="11">
    <location>
        <begin position="238"/>
        <end position="245"/>
    </location>
</feature>
<feature type="helix" evidence="11">
    <location>
        <begin position="255"/>
        <end position="262"/>
    </location>
</feature>
<feature type="strand" evidence="11">
    <location>
        <begin position="271"/>
        <end position="275"/>
    </location>
</feature>
<feature type="strand" evidence="11">
    <location>
        <begin position="287"/>
        <end position="292"/>
    </location>
</feature>
<feature type="helix" evidence="11">
    <location>
        <begin position="293"/>
        <end position="297"/>
    </location>
</feature>
<feature type="strand" evidence="11">
    <location>
        <begin position="316"/>
        <end position="320"/>
    </location>
</feature>
<feature type="strand" evidence="11">
    <location>
        <begin position="323"/>
        <end position="326"/>
    </location>
</feature>
<feature type="strand" evidence="11">
    <location>
        <begin position="328"/>
        <end position="332"/>
    </location>
</feature>
<feature type="helix" evidence="11">
    <location>
        <begin position="335"/>
        <end position="348"/>
    </location>
</feature>
<feature type="strand" evidence="11">
    <location>
        <begin position="356"/>
        <end position="359"/>
    </location>
</feature>
<feature type="helix" evidence="11">
    <location>
        <begin position="366"/>
        <end position="371"/>
    </location>
</feature>
<feature type="helix" evidence="11">
    <location>
        <begin position="374"/>
        <end position="379"/>
    </location>
</feature>
<feature type="strand" evidence="11">
    <location>
        <begin position="381"/>
        <end position="386"/>
    </location>
</feature>
<feature type="helix" evidence="11">
    <location>
        <begin position="397"/>
        <end position="404"/>
    </location>
</feature>
<feature type="strand" evidence="11">
    <location>
        <begin position="408"/>
        <end position="412"/>
    </location>
</feature>
<feature type="helix" evidence="11">
    <location>
        <begin position="414"/>
        <end position="420"/>
    </location>
</feature>
<feature type="strand" evidence="11">
    <location>
        <begin position="427"/>
        <end position="430"/>
    </location>
</feature>
<feature type="strand" evidence="11">
    <location>
        <begin position="438"/>
        <end position="441"/>
    </location>
</feature>
<feature type="helix" evidence="11">
    <location>
        <begin position="448"/>
        <end position="456"/>
    </location>
</feature>
<feature type="strand" evidence="11">
    <location>
        <begin position="461"/>
        <end position="463"/>
    </location>
</feature>
<feature type="strand" evidence="11">
    <location>
        <begin position="465"/>
        <end position="467"/>
    </location>
</feature>
<feature type="turn" evidence="11">
    <location>
        <begin position="472"/>
        <end position="474"/>
    </location>
</feature>
<feature type="strand" evidence="11">
    <location>
        <begin position="478"/>
        <end position="480"/>
    </location>
</feature>
<feature type="turn" evidence="11">
    <location>
        <begin position="483"/>
        <end position="485"/>
    </location>
</feature>
<feature type="strand" evidence="11">
    <location>
        <begin position="503"/>
        <end position="506"/>
    </location>
</feature>
<feature type="strand" evidence="11">
    <location>
        <begin position="508"/>
        <end position="510"/>
    </location>
</feature>
<feature type="strand" evidence="11">
    <location>
        <begin position="520"/>
        <end position="527"/>
    </location>
</feature>
<feature type="helix" evidence="11">
    <location>
        <begin position="540"/>
        <end position="547"/>
    </location>
</feature>
<feature type="strand" evidence="11">
    <location>
        <begin position="549"/>
        <end position="551"/>
    </location>
</feature>
<feature type="strand" evidence="11">
    <location>
        <begin position="554"/>
        <end position="563"/>
    </location>
</feature>
<feature type="strand" evidence="11">
    <location>
        <begin position="569"/>
        <end position="571"/>
    </location>
</feature>
<feature type="strand" evidence="11">
    <location>
        <begin position="581"/>
        <end position="583"/>
    </location>
</feature>
<feature type="helix" evidence="11">
    <location>
        <begin position="588"/>
        <end position="596"/>
    </location>
</feature>
<feature type="strand" evidence="11">
    <location>
        <begin position="601"/>
        <end position="607"/>
    </location>
</feature>
<feature type="strand" evidence="11">
    <location>
        <begin position="619"/>
        <end position="624"/>
    </location>
</feature>
<feature type="helix" evidence="11">
    <location>
        <begin position="641"/>
        <end position="652"/>
    </location>
</feature>
<feature type="turn" evidence="11">
    <location>
        <begin position="655"/>
        <end position="657"/>
    </location>
</feature>
<feature type="strand" evidence="11">
    <location>
        <begin position="660"/>
        <end position="664"/>
    </location>
</feature>
<feature type="helix" evidence="11">
    <location>
        <begin position="678"/>
        <end position="683"/>
    </location>
</feature>
<feature type="helix" evidence="11">
    <location>
        <begin position="702"/>
        <end position="709"/>
    </location>
</feature>
<feature type="turn" evidence="11">
    <location>
        <begin position="710"/>
        <end position="712"/>
    </location>
</feature>
<name>ACS1_YEAST</name>